<gene>
    <name evidence="1" type="primary">rgy1</name>
    <name type="ordered locus">STK_12900</name>
</gene>
<protein>
    <recommendedName>
        <fullName evidence="1">Reverse gyrase 1</fullName>
        <ecNumber evidence="1">5.6.2.-</ecNumber>
    </recommendedName>
</protein>
<comment type="function">
    <text evidence="1">Modifies the topological state of DNA by introducing positive supercoils in an ATP-dependent process, increasing the linking number in steps of +1. Binds to single-stranded DNA, transiently cleaves and then rejoins the ends, introducing a positive supercoil in the process. The scissile phosphodiester is attacked by the catalytic tyrosine of the enzyme, resulting in the formation of a DNA-(5'-phosphotyrosyl)-enzyme intermediate. Probably involved in rewinding DNA strands in regions of the chromosome that have opened up to allow replication, transcription, DNA repair and/or for DNA protection.</text>
</comment>
<comment type="catalytic activity">
    <reaction evidence="1">
        <text>ATP + H2O = ADP + phosphate + H(+)</text>
        <dbReference type="Rhea" id="RHEA:13065"/>
        <dbReference type="ChEBI" id="CHEBI:15377"/>
        <dbReference type="ChEBI" id="CHEBI:15378"/>
        <dbReference type="ChEBI" id="CHEBI:30616"/>
        <dbReference type="ChEBI" id="CHEBI:43474"/>
        <dbReference type="ChEBI" id="CHEBI:456216"/>
    </reaction>
</comment>
<comment type="cofactor">
    <cofactor evidence="1">
        <name>Zn(2+)</name>
        <dbReference type="ChEBI" id="CHEBI:29105"/>
    </cofactor>
    <text evidence="1">Binds 2 zinc ions per subunit.</text>
</comment>
<comment type="cofactor">
    <cofactor evidence="1">
        <name>Mg(2+)</name>
        <dbReference type="ChEBI" id="CHEBI:18420"/>
    </cofactor>
</comment>
<comment type="subunit">
    <text evidence="1 6">Monomer (PubMed:12359215).</text>
</comment>
<comment type="subcellular location">
    <subcellularLocation>
        <location evidence="1">Cytoplasm</location>
    </subcellularLocation>
</comment>
<comment type="domain">
    <text evidence="1">Introduction of positive supercoils requires the cooperation of both domains. The helicase-like domain probably does not directly unwind DNA, but more likely acts by driving ATP-dependent conformational changes within the whole enzyme. A beta hairpin in the 'latch' region of the N-terminal domain plays a regulatory role in the enzyme, repressing topoisomerase activity in the absence of ATP and preventing the enzyme from acting as an ATP-independent relaxing enzyme; it also helps to coordinate nucleotide hydrolysis by the ATPase domain with the supercoiling activity of the topoisomerase domain.</text>
</comment>
<comment type="miscellaneous">
    <text evidence="1">This enzyme is the only unique feature of hyperthermophilic bacteria/archaea known and seems to be essential for adaptation to life at high temperatures. It may play a role in stabilization of DNA at high temperatures.</text>
</comment>
<comment type="similarity">
    <text evidence="1">In the N-terminal section; belongs to the DEAD box helicase family. DDVD subfamily.</text>
</comment>
<comment type="similarity">
    <text evidence="1">In the C-terminal section; belongs to the type IA topoisomerase family.</text>
</comment>
<comment type="caution">
    <text evidence="5">Ser-186 is present instead of the conserved Val which is part of the DDVD box.</text>
</comment>
<accession>Q971T7</accession>
<accession>F9VP02</accession>
<reference key="1">
    <citation type="journal article" date="2001" name="DNA Res.">
        <title>Complete genome sequence of an aerobic thermoacidophilic Crenarchaeon, Sulfolobus tokodaii strain7.</title>
        <authorList>
            <person name="Kawarabayasi Y."/>
            <person name="Hino Y."/>
            <person name="Horikawa H."/>
            <person name="Jin-no K."/>
            <person name="Takahashi M."/>
            <person name="Sekine M."/>
            <person name="Baba S."/>
            <person name="Ankai A."/>
            <person name="Kosugi H."/>
            <person name="Hosoyama A."/>
            <person name="Fukui S."/>
            <person name="Nagai Y."/>
            <person name="Nishijima K."/>
            <person name="Otsuka R."/>
            <person name="Nakazawa H."/>
            <person name="Takamiya M."/>
            <person name="Kato Y."/>
            <person name="Yoshizawa T."/>
            <person name="Tanaka T."/>
            <person name="Kudoh Y."/>
            <person name="Yamazaki J."/>
            <person name="Kushida N."/>
            <person name="Oguchi A."/>
            <person name="Aoki K."/>
            <person name="Masuda S."/>
            <person name="Yanagii M."/>
            <person name="Nishimura M."/>
            <person name="Yamagishi A."/>
            <person name="Oshima T."/>
            <person name="Kikuchi H."/>
        </authorList>
    </citation>
    <scope>NUCLEOTIDE SEQUENCE [LARGE SCALE GENOMIC DNA]</scope>
    <source>
        <strain>DSM 16993 / JCM 10545 / NBRC 100140 / 7</strain>
    </source>
</reference>
<reference key="2">
    <citation type="journal article" date="2002" name="Biochem. Biophys. Res. Commun.">
        <title>Three-dimensional electron microscopy of the reverse gyrase from Sulfolobus tokodaii.</title>
        <authorList>
            <person name="Matoba K."/>
            <person name="Mayanagi K."/>
            <person name="Nakasu S."/>
            <person name="Kikuchi A."/>
            <person name="Morikawa K."/>
        </authorList>
    </citation>
    <scope>ELECTRON MICROSCOPY (23 ANGSTROMS)</scope>
    <scope>SUBUNIT</scope>
    <scope>DNA-BINDING</scope>
</reference>
<sequence length="1156" mass="132084">MLKVYYTFGCPNCGGPIDDEHLLAGVPCSKCLPGRVENLDYRVIYDLLVKNSTLKGYAEYFYDNETFEEIVRIFKRVIGNEPWNLQKYWIKRLAKSESFSLSAPTGLGKTTTLLVYSLFFSNTTLYVVPTNSLKDQICERLRNMGAKVSCNDVKEEYINVATFNRILRHYDNYVSLQPKLVIVDDSDMILKSGKTTEVMAKILGISEEIFQYAISLIRLKRILKFNEDDKELKNKIVELEYKIGSWKPFVQFLVASATLRPKGIKQQALRTLIGFEPSTIQTYLRNIADLYYQGVDIEAILDKISDNGGLLLVSKEYGREKMLELKEIIEKRGYSTGLAISGRKFLNKFTEGKIDYLIGSASYYGVAVRGLDEPKRLKYVIFYGIPKIRLNLTDALNNPSLIVKIGELLNIDVKDIRRKLLFLSPPEFQILRYSLMKDEELSGKLKDIKVNLINIKEKIWDVLKSDNIKKLKADTFLVTENNGKYYVYIPDTVTYIQASGRSSRIISNGLTFGISIVLVDNIDLLDILSQKLKKIIPNFMFKNINEVDIRELKSLAVSSREVSTSQKKKINIKTILLIVESPTKAKTIARLFGRPSRREVHGIPVYETIILVNDEILITNIIATKGHITDLTTENIGYYGVEVGNNEFNAYYSPIYKCYNCGKTFTIKSNTCPYCGSVFISSSEKVVSALRKLSTEVDEIYIASDPDQEGEKIAYDVAMLISPYNKNIYRIKYHEITRNGILNAILNKGKINMNLVKSQIVRRIEDRWIGFELSLALKSMFYERNHGSGRVQGPVLSWIVERTKEYKKNYGWILYIKLGDYAIKKFFRIKEEANKFIEKLNIKINLISERKEIQNPLPPFTTDSLLMDAYDKLGIGSQIVMKIAQDLFESGLITYHRTDSTHVSALGISIAKEYLESKNLNDSFSGRSWGNEGTHEAIRPTSSMDTESLIKDIEDNPNKYFIKFTKYHLRIYDLIFRRFIASQMKPAEVTYSKFEIFINGEKLEVELPTKISGGFSIIYPLKTYVVSEKYSTYLTKGSIIPLFTYAEIIKNMKEKEIGRPSTYAKTISALIRHGYVVESKRKALLIATNKGIKAYEFLSSCCSDLISENRTKLLLQKIDKIANGDVNVDYVLEDLHKEITQISGKLVNSLKLDTNV</sequence>
<evidence type="ECO:0000255" key="1">
    <source>
        <dbReference type="HAMAP-Rule" id="MF_01125"/>
    </source>
</evidence>
<evidence type="ECO:0000255" key="2">
    <source>
        <dbReference type="PROSITE-ProRule" id="PRU01380"/>
    </source>
</evidence>
<evidence type="ECO:0000255" key="3">
    <source>
        <dbReference type="PROSITE-ProRule" id="PRU01381"/>
    </source>
</evidence>
<evidence type="ECO:0000255" key="4">
    <source>
        <dbReference type="PROSITE-ProRule" id="PRU01383"/>
    </source>
</evidence>
<evidence type="ECO:0000305" key="5"/>
<evidence type="ECO:0000305" key="6">
    <source>
    </source>
</evidence>
<feature type="chain" id="PRO_0000158094" description="Reverse gyrase 1">
    <location>
        <begin position="1"/>
        <end position="1156"/>
    </location>
</feature>
<feature type="domain" description="Helicase ATP-binding" evidence="1">
    <location>
        <begin position="90"/>
        <end position="277"/>
    </location>
</feature>
<feature type="domain" description="Toprim" evidence="1">
    <location>
        <begin position="574"/>
        <end position="736"/>
    </location>
</feature>
<feature type="domain" description="Topo IA-type catalytic" evidence="4">
    <location>
        <begin position="752"/>
        <end position="1143"/>
    </location>
</feature>
<feature type="zinc finger region" description="RG N-terminal-type" evidence="2">
    <location>
        <begin position="1"/>
        <end position="38"/>
    </location>
</feature>
<feature type="zinc finger region" description="RG C-terminal-type" evidence="3">
    <location>
        <begin position="655"/>
        <end position="682"/>
    </location>
</feature>
<feature type="region of interest" description="Topoisomerase I" evidence="1">
    <location>
        <begin position="570"/>
        <end position="1156"/>
    </location>
</feature>
<feature type="short sequence motif" description="DEAD box" evidence="1">
    <location>
        <begin position="184"/>
        <end position="187"/>
    </location>
</feature>
<feature type="active site" description="O-(5'-phospho-DNA)-tyrosine intermediate" evidence="4">
    <location>
        <position position="895"/>
    </location>
</feature>
<feature type="binding site" evidence="1">
    <location>
        <position position="10"/>
    </location>
    <ligand>
        <name>Zn(2+)</name>
        <dbReference type="ChEBI" id="CHEBI:29105"/>
        <label>1</label>
    </ligand>
</feature>
<feature type="binding site" evidence="1">
    <location>
        <position position="13"/>
    </location>
    <ligand>
        <name>Zn(2+)</name>
        <dbReference type="ChEBI" id="CHEBI:29105"/>
        <label>1</label>
    </ligand>
</feature>
<feature type="binding site" evidence="1">
    <location>
        <position position="28"/>
    </location>
    <ligand>
        <name>Zn(2+)</name>
        <dbReference type="ChEBI" id="CHEBI:29105"/>
        <label>1</label>
    </ligand>
</feature>
<feature type="binding site" evidence="1">
    <location>
        <position position="31"/>
    </location>
    <ligand>
        <name>Zn(2+)</name>
        <dbReference type="ChEBI" id="CHEBI:29105"/>
        <label>1</label>
    </ligand>
</feature>
<feature type="binding site" evidence="1">
    <location>
        <position position="86"/>
    </location>
    <ligand>
        <name>ATP</name>
        <dbReference type="ChEBI" id="CHEBI:30616"/>
    </ligand>
</feature>
<feature type="binding site" evidence="1">
    <location>
        <begin position="103"/>
        <end position="110"/>
    </location>
    <ligand>
        <name>ATP</name>
        <dbReference type="ChEBI" id="CHEBI:30616"/>
    </ligand>
</feature>
<feature type="binding site" evidence="1">
    <location>
        <position position="580"/>
    </location>
    <ligand>
        <name>Mg(2+)</name>
        <dbReference type="ChEBI" id="CHEBI:18420"/>
        <note>catalytic</note>
    </ligand>
</feature>
<feature type="binding site" evidence="1">
    <location>
        <position position="658"/>
    </location>
    <ligand>
        <name>Zn(2+)</name>
        <dbReference type="ChEBI" id="CHEBI:29105"/>
        <label>2</label>
    </ligand>
</feature>
<feature type="binding site" evidence="1">
    <location>
        <position position="661"/>
    </location>
    <ligand>
        <name>Zn(2+)</name>
        <dbReference type="ChEBI" id="CHEBI:29105"/>
        <label>2</label>
    </ligand>
</feature>
<feature type="binding site" evidence="1">
    <location>
        <position position="672"/>
    </location>
    <ligand>
        <name>Zn(2+)</name>
        <dbReference type="ChEBI" id="CHEBI:29105"/>
        <label>2</label>
    </ligand>
</feature>
<feature type="binding site" evidence="1">
    <location>
        <position position="675"/>
    </location>
    <ligand>
        <name>Zn(2+)</name>
        <dbReference type="ChEBI" id="CHEBI:29105"/>
        <label>2</label>
    </ligand>
</feature>
<feature type="binding site" evidence="1">
    <location>
        <position position="705"/>
    </location>
    <ligand>
        <name>Mg(2+)</name>
        <dbReference type="ChEBI" id="CHEBI:18420"/>
        <note>catalytic</note>
    </ligand>
</feature>
<organism>
    <name type="scientific">Sulfurisphaera tokodaii (strain DSM 16993 / JCM 10545 / NBRC 100140 / 7)</name>
    <name type="common">Sulfolobus tokodaii</name>
    <dbReference type="NCBI Taxonomy" id="273063"/>
    <lineage>
        <taxon>Archaea</taxon>
        <taxon>Thermoproteota</taxon>
        <taxon>Thermoprotei</taxon>
        <taxon>Sulfolobales</taxon>
        <taxon>Sulfolobaceae</taxon>
        <taxon>Sulfurisphaera</taxon>
    </lineage>
</organism>
<dbReference type="EC" id="5.6.2.-" evidence="1"/>
<dbReference type="EMBL" id="BA000023">
    <property type="protein sequence ID" value="BAK54510.1"/>
    <property type="molecule type" value="Genomic_DNA"/>
</dbReference>
<dbReference type="RefSeq" id="WP_010979311.1">
    <property type="nucleotide sequence ID" value="NC_003106.2"/>
</dbReference>
<dbReference type="SMR" id="Q971T7"/>
<dbReference type="STRING" id="273063.STK_12900"/>
<dbReference type="GeneID" id="1459291"/>
<dbReference type="KEGG" id="sto:STK_12900"/>
<dbReference type="PATRIC" id="fig|273063.9.peg.1449"/>
<dbReference type="eggNOG" id="arCOG01526">
    <property type="taxonomic scope" value="Archaea"/>
</dbReference>
<dbReference type="OrthoDB" id="30963at2157"/>
<dbReference type="Proteomes" id="UP000001015">
    <property type="component" value="Chromosome"/>
</dbReference>
<dbReference type="GO" id="GO:0005737">
    <property type="term" value="C:cytoplasm"/>
    <property type="evidence" value="ECO:0007669"/>
    <property type="project" value="UniProtKB-SubCell"/>
</dbReference>
<dbReference type="GO" id="GO:0005524">
    <property type="term" value="F:ATP binding"/>
    <property type="evidence" value="ECO:0007669"/>
    <property type="project" value="UniProtKB-UniRule"/>
</dbReference>
<dbReference type="GO" id="GO:0016887">
    <property type="term" value="F:ATP hydrolysis activity"/>
    <property type="evidence" value="ECO:0007669"/>
    <property type="project" value="RHEA"/>
</dbReference>
<dbReference type="GO" id="GO:0003677">
    <property type="term" value="F:DNA binding"/>
    <property type="evidence" value="ECO:0007669"/>
    <property type="project" value="UniProtKB-UniRule"/>
</dbReference>
<dbReference type="GO" id="GO:0003918">
    <property type="term" value="F:DNA topoisomerase type II (double strand cut, ATP-hydrolyzing) activity"/>
    <property type="evidence" value="ECO:0007669"/>
    <property type="project" value="UniProtKB-EC"/>
</dbReference>
<dbReference type="GO" id="GO:0160097">
    <property type="term" value="F:reverse gyrase activity"/>
    <property type="evidence" value="ECO:0007669"/>
    <property type="project" value="UniProtKB-UniRule"/>
</dbReference>
<dbReference type="GO" id="GO:0008270">
    <property type="term" value="F:zinc ion binding"/>
    <property type="evidence" value="ECO:0007669"/>
    <property type="project" value="UniProtKB-UniRule"/>
</dbReference>
<dbReference type="GO" id="GO:0006265">
    <property type="term" value="P:DNA topological change"/>
    <property type="evidence" value="ECO:0007669"/>
    <property type="project" value="UniProtKB-UniRule"/>
</dbReference>
<dbReference type="CDD" id="cd18798">
    <property type="entry name" value="SF2_C_reverse_gyrase"/>
    <property type="match status" value="1"/>
</dbReference>
<dbReference type="CDD" id="cd00186">
    <property type="entry name" value="TOP1Ac"/>
    <property type="match status" value="1"/>
</dbReference>
<dbReference type="Gene3D" id="2.60.510.20">
    <property type="match status" value="1"/>
</dbReference>
<dbReference type="Gene3D" id="3.40.50.140">
    <property type="match status" value="1"/>
</dbReference>
<dbReference type="Gene3D" id="3.40.50.300">
    <property type="entry name" value="P-loop containing nucleotide triphosphate hydrolases"/>
    <property type="match status" value="3"/>
</dbReference>
<dbReference type="Gene3D" id="1.10.460.10">
    <property type="entry name" value="Topoisomerase I, domain 2"/>
    <property type="match status" value="1"/>
</dbReference>
<dbReference type="Gene3D" id="1.10.290.10">
    <property type="entry name" value="Topoisomerase I, domain 4"/>
    <property type="match status" value="1"/>
</dbReference>
<dbReference type="HAMAP" id="MF_01125">
    <property type="entry name" value="Reverse_gyrase"/>
    <property type="match status" value="1"/>
</dbReference>
<dbReference type="InterPro" id="IPR011545">
    <property type="entry name" value="DEAD/DEAH_box_helicase_dom"/>
</dbReference>
<dbReference type="InterPro" id="IPR014001">
    <property type="entry name" value="Helicase_ATP-bd"/>
</dbReference>
<dbReference type="InterPro" id="IPR027417">
    <property type="entry name" value="P-loop_NTPase"/>
</dbReference>
<dbReference type="InterPro" id="IPR005736">
    <property type="entry name" value="Reverse_gyrase"/>
</dbReference>
<dbReference type="InterPro" id="IPR003601">
    <property type="entry name" value="Topo_IA_2"/>
</dbReference>
<dbReference type="InterPro" id="IPR013497">
    <property type="entry name" value="Topo_IA_cen"/>
</dbReference>
<dbReference type="InterPro" id="IPR013824">
    <property type="entry name" value="Topo_IA_cen_sub1"/>
</dbReference>
<dbReference type="InterPro" id="IPR013826">
    <property type="entry name" value="Topo_IA_cen_sub3"/>
</dbReference>
<dbReference type="InterPro" id="IPR023405">
    <property type="entry name" value="Topo_IA_core_domain"/>
</dbReference>
<dbReference type="InterPro" id="IPR003602">
    <property type="entry name" value="Topo_IA_DNA-bd_dom"/>
</dbReference>
<dbReference type="InterPro" id="IPR006171">
    <property type="entry name" value="TOPRIM_dom"/>
</dbReference>
<dbReference type="InterPro" id="IPR040569">
    <property type="entry name" value="Znf_Rg"/>
</dbReference>
<dbReference type="NCBIfam" id="TIGR01054">
    <property type="entry name" value="rgy"/>
    <property type="match status" value="1"/>
</dbReference>
<dbReference type="PANTHER" id="PTHR43505">
    <property type="entry name" value="REVERSE GYRASE"/>
    <property type="match status" value="1"/>
</dbReference>
<dbReference type="PANTHER" id="PTHR43505:SF1">
    <property type="entry name" value="REVERSE GYRASE"/>
    <property type="match status" value="1"/>
</dbReference>
<dbReference type="Pfam" id="PF00270">
    <property type="entry name" value="DEAD"/>
    <property type="match status" value="1"/>
</dbReference>
<dbReference type="Pfam" id="PF01131">
    <property type="entry name" value="Topoisom_bac"/>
    <property type="match status" value="1"/>
</dbReference>
<dbReference type="Pfam" id="PF01751">
    <property type="entry name" value="Toprim"/>
    <property type="match status" value="1"/>
</dbReference>
<dbReference type="Pfam" id="PF17915">
    <property type="entry name" value="zf_Rg"/>
    <property type="match status" value="1"/>
</dbReference>
<dbReference type="PRINTS" id="PR00417">
    <property type="entry name" value="PRTPISMRASEI"/>
</dbReference>
<dbReference type="SMART" id="SM00487">
    <property type="entry name" value="DEXDc"/>
    <property type="match status" value="1"/>
</dbReference>
<dbReference type="SMART" id="SM00437">
    <property type="entry name" value="TOP1Ac"/>
    <property type="match status" value="1"/>
</dbReference>
<dbReference type="SMART" id="SM00436">
    <property type="entry name" value="TOP1Bc"/>
    <property type="match status" value="1"/>
</dbReference>
<dbReference type="SMART" id="SM00493">
    <property type="entry name" value="TOPRIM"/>
    <property type="match status" value="1"/>
</dbReference>
<dbReference type="SUPFAM" id="SSF52540">
    <property type="entry name" value="P-loop containing nucleoside triphosphate hydrolases"/>
    <property type="match status" value="2"/>
</dbReference>
<dbReference type="SUPFAM" id="SSF56712">
    <property type="entry name" value="Prokaryotic type I DNA topoisomerase"/>
    <property type="match status" value="1"/>
</dbReference>
<dbReference type="PROSITE" id="PS51192">
    <property type="entry name" value="HELICASE_ATP_BIND_1"/>
    <property type="match status" value="1"/>
</dbReference>
<dbReference type="PROSITE" id="PS52039">
    <property type="entry name" value="TOPO_IA_2"/>
    <property type="match status" value="1"/>
</dbReference>
<dbReference type="PROSITE" id="PS50880">
    <property type="entry name" value="TOPRIM"/>
    <property type="match status" value="1"/>
</dbReference>
<dbReference type="PROSITE" id="PS52037">
    <property type="entry name" value="ZF_RG_C"/>
    <property type="match status" value="1"/>
</dbReference>
<dbReference type="PROSITE" id="PS52036">
    <property type="entry name" value="ZF_RG_N"/>
    <property type="match status" value="1"/>
</dbReference>
<proteinExistence type="evidence at protein level"/>
<keyword id="KW-0067">ATP-binding</keyword>
<keyword id="KW-0963">Cytoplasm</keyword>
<keyword id="KW-0238">DNA-binding</keyword>
<keyword id="KW-0413">Isomerase</keyword>
<keyword id="KW-0460">Magnesium</keyword>
<keyword id="KW-0479">Metal-binding</keyword>
<keyword id="KW-0547">Nucleotide-binding</keyword>
<keyword id="KW-1185">Reference proteome</keyword>
<keyword id="KW-0677">Repeat</keyword>
<keyword id="KW-0799">Topoisomerase</keyword>
<keyword id="KW-0862">Zinc</keyword>
<keyword id="KW-0863">Zinc-finger</keyword>
<name>RGYR1_SULTO</name>